<comment type="similarity">
    <text evidence="1">Belongs to the LarC family.</text>
</comment>
<keyword id="KW-0533">Nickel</keyword>
<keyword id="KW-1185">Reference proteome</keyword>
<accession>B1XPA6</accession>
<evidence type="ECO:0000255" key="1">
    <source>
        <dbReference type="HAMAP-Rule" id="MF_01074"/>
    </source>
</evidence>
<evidence type="ECO:0000256" key="2">
    <source>
        <dbReference type="SAM" id="MobiDB-lite"/>
    </source>
</evidence>
<gene>
    <name type="ordered locus">SYNPCC7002_A1710</name>
</gene>
<feature type="chain" id="PRO_1000136695" description="Putative nickel insertion protein">
    <location>
        <begin position="1"/>
        <end position="414"/>
    </location>
</feature>
<feature type="region of interest" description="Disordered" evidence="2">
    <location>
        <begin position="70"/>
        <end position="91"/>
    </location>
</feature>
<sequence length="414" mass="45373">MKKIAYLECPTGIAGDMCLGALIDGGVPLEYLKNQLNRLGIAAEYDLRAETVIRQGQRATKVFVDLKTKATHHDHDHSQDQTHHHHADHAPHRHLPEIQAMIKGAGLPERVERWSLAIFQNLAIAEATVHGTTPEQVHFHEVGATDALVDIVGTCLGLDWLEIDELYCAPMPTGGGTVKAAHGILPVPVPAVLQLWQQRQVPVYSNGIEKELVTPTGAAIATTLATDFCQPPAMTLAKIALGSGTIDLPLPNLLRLWIGHQPETPHLETIVTLETQIDDLNPQAIAYACEKLQAAGALDVFTQGITMKKNRLGTLLTVICPVALVEICEEILFTETSTLGIRRHTQTRSILQRRFETVATPAGEIQLKIGYRGDKIYNVQPEYEDVKAIAQQTGQSWQAIAQQALCQFPRDAES</sequence>
<reference key="1">
    <citation type="submission" date="2008-02" db="EMBL/GenBank/DDBJ databases">
        <title>Complete sequence of Synechococcus sp. PCC 7002.</title>
        <authorList>
            <person name="Li T."/>
            <person name="Zhao J."/>
            <person name="Zhao C."/>
            <person name="Liu Z."/>
            <person name="Zhao F."/>
            <person name="Marquardt J."/>
            <person name="Nomura C.T."/>
            <person name="Persson S."/>
            <person name="Detter J.C."/>
            <person name="Richardson P.M."/>
            <person name="Lanz C."/>
            <person name="Schuster S.C."/>
            <person name="Wang J."/>
            <person name="Li S."/>
            <person name="Huang X."/>
            <person name="Cai T."/>
            <person name="Yu Z."/>
            <person name="Luo J."/>
            <person name="Zhao J."/>
            <person name="Bryant D.A."/>
        </authorList>
    </citation>
    <scope>NUCLEOTIDE SEQUENCE [LARGE SCALE GENOMIC DNA]</scope>
    <source>
        <strain>ATCC 27264 / PCC 7002 / PR-6</strain>
    </source>
</reference>
<name>Y1710_PICP2</name>
<protein>
    <recommendedName>
        <fullName evidence="1">Putative nickel insertion protein</fullName>
    </recommendedName>
</protein>
<dbReference type="EMBL" id="CP000951">
    <property type="protein sequence ID" value="ACA99699.1"/>
    <property type="molecule type" value="Genomic_DNA"/>
</dbReference>
<dbReference type="SMR" id="B1XPA6"/>
<dbReference type="STRING" id="32049.SYNPCC7002_A1710"/>
<dbReference type="KEGG" id="syp:SYNPCC7002_A1710"/>
<dbReference type="eggNOG" id="COG1641">
    <property type="taxonomic scope" value="Bacteria"/>
</dbReference>
<dbReference type="HOGENOM" id="CLU_028523_2_1_3"/>
<dbReference type="Proteomes" id="UP000001688">
    <property type="component" value="Chromosome"/>
</dbReference>
<dbReference type="GO" id="GO:0016829">
    <property type="term" value="F:lyase activity"/>
    <property type="evidence" value="ECO:0007669"/>
    <property type="project" value="UniProtKB-UniRule"/>
</dbReference>
<dbReference type="GO" id="GO:0016151">
    <property type="term" value="F:nickel cation binding"/>
    <property type="evidence" value="ECO:0007669"/>
    <property type="project" value="UniProtKB-UniRule"/>
</dbReference>
<dbReference type="Gene3D" id="3.10.20.300">
    <property type="entry name" value="mk0293 like domain"/>
    <property type="match status" value="1"/>
</dbReference>
<dbReference type="Gene3D" id="3.30.70.1380">
    <property type="entry name" value="Transcriptional regulatory protein pf0864 domain like"/>
    <property type="match status" value="1"/>
</dbReference>
<dbReference type="HAMAP" id="MF_01074">
    <property type="entry name" value="LarC"/>
    <property type="match status" value="1"/>
</dbReference>
<dbReference type="InterPro" id="IPR002822">
    <property type="entry name" value="Ni_insertion"/>
</dbReference>
<dbReference type="NCBIfam" id="TIGR00299">
    <property type="entry name" value="nickel pincer cofactor biosynthesis protein LarC"/>
    <property type="match status" value="1"/>
</dbReference>
<dbReference type="PANTHER" id="PTHR36566">
    <property type="entry name" value="NICKEL INSERTION PROTEIN-RELATED"/>
    <property type="match status" value="1"/>
</dbReference>
<dbReference type="PANTHER" id="PTHR36566:SF1">
    <property type="entry name" value="PYRIDINIUM-3,5-BISTHIOCARBOXYLIC ACID MONONUCLEOTIDE NICKEL INSERTION PROTEIN"/>
    <property type="match status" value="1"/>
</dbReference>
<dbReference type="Pfam" id="PF01969">
    <property type="entry name" value="Ni_insertion"/>
    <property type="match status" value="1"/>
</dbReference>
<proteinExistence type="inferred from homology"/>
<organism>
    <name type="scientific">Picosynechococcus sp. (strain ATCC 27264 / PCC 7002 / PR-6)</name>
    <name type="common">Agmenellum quadruplicatum</name>
    <dbReference type="NCBI Taxonomy" id="32049"/>
    <lineage>
        <taxon>Bacteria</taxon>
        <taxon>Bacillati</taxon>
        <taxon>Cyanobacteriota</taxon>
        <taxon>Cyanophyceae</taxon>
        <taxon>Oscillatoriophycideae</taxon>
        <taxon>Chroococcales</taxon>
        <taxon>Geminocystaceae</taxon>
        <taxon>Picosynechococcus</taxon>
    </lineage>
</organism>